<organism>
    <name type="scientific">Nitrosococcus oceani (strain ATCC 19707 / BCRC 17464 / JCM 30415 / NCIMB 11848 / C-107)</name>
    <dbReference type="NCBI Taxonomy" id="323261"/>
    <lineage>
        <taxon>Bacteria</taxon>
        <taxon>Pseudomonadati</taxon>
        <taxon>Pseudomonadota</taxon>
        <taxon>Gammaproteobacteria</taxon>
        <taxon>Chromatiales</taxon>
        <taxon>Chromatiaceae</taxon>
        <taxon>Nitrosococcus</taxon>
    </lineage>
</organism>
<feature type="chain" id="PRO_1000054277" description="Multifunctional CCA protein">
    <location>
        <begin position="1"/>
        <end position="406"/>
    </location>
</feature>
<feature type="domain" description="HD" evidence="1">
    <location>
        <begin position="225"/>
        <end position="326"/>
    </location>
</feature>
<feature type="binding site" evidence="1">
    <location>
        <position position="8"/>
    </location>
    <ligand>
        <name>ATP</name>
        <dbReference type="ChEBI" id="CHEBI:30616"/>
    </ligand>
</feature>
<feature type="binding site" evidence="1">
    <location>
        <position position="8"/>
    </location>
    <ligand>
        <name>CTP</name>
        <dbReference type="ChEBI" id="CHEBI:37563"/>
    </ligand>
</feature>
<feature type="binding site" evidence="1">
    <location>
        <position position="11"/>
    </location>
    <ligand>
        <name>ATP</name>
        <dbReference type="ChEBI" id="CHEBI:30616"/>
    </ligand>
</feature>
<feature type="binding site" evidence="1">
    <location>
        <position position="11"/>
    </location>
    <ligand>
        <name>CTP</name>
        <dbReference type="ChEBI" id="CHEBI:37563"/>
    </ligand>
</feature>
<feature type="binding site" evidence="1">
    <location>
        <position position="21"/>
    </location>
    <ligand>
        <name>Mg(2+)</name>
        <dbReference type="ChEBI" id="CHEBI:18420"/>
    </ligand>
</feature>
<feature type="binding site" evidence="1">
    <location>
        <position position="23"/>
    </location>
    <ligand>
        <name>Mg(2+)</name>
        <dbReference type="ChEBI" id="CHEBI:18420"/>
    </ligand>
</feature>
<feature type="binding site" evidence="1">
    <location>
        <position position="91"/>
    </location>
    <ligand>
        <name>ATP</name>
        <dbReference type="ChEBI" id="CHEBI:30616"/>
    </ligand>
</feature>
<feature type="binding site" evidence="1">
    <location>
        <position position="91"/>
    </location>
    <ligand>
        <name>CTP</name>
        <dbReference type="ChEBI" id="CHEBI:37563"/>
    </ligand>
</feature>
<feature type="binding site" evidence="1">
    <location>
        <position position="137"/>
    </location>
    <ligand>
        <name>ATP</name>
        <dbReference type="ChEBI" id="CHEBI:30616"/>
    </ligand>
</feature>
<feature type="binding site" evidence="1">
    <location>
        <position position="137"/>
    </location>
    <ligand>
        <name>CTP</name>
        <dbReference type="ChEBI" id="CHEBI:37563"/>
    </ligand>
</feature>
<feature type="binding site" evidence="1">
    <location>
        <position position="140"/>
    </location>
    <ligand>
        <name>ATP</name>
        <dbReference type="ChEBI" id="CHEBI:30616"/>
    </ligand>
</feature>
<feature type="binding site" evidence="1">
    <location>
        <position position="140"/>
    </location>
    <ligand>
        <name>CTP</name>
        <dbReference type="ChEBI" id="CHEBI:37563"/>
    </ligand>
</feature>
<name>CCA_NITOC</name>
<dbReference type="EC" id="2.7.7.72" evidence="1"/>
<dbReference type="EC" id="3.1.3.-" evidence="1"/>
<dbReference type="EC" id="3.1.4.-" evidence="1"/>
<dbReference type="EMBL" id="CP000127">
    <property type="protein sequence ID" value="ABA56915.1"/>
    <property type="molecule type" value="Genomic_DNA"/>
</dbReference>
<dbReference type="RefSeq" id="WP_002813116.1">
    <property type="nucleotide sequence ID" value="NC_007484.1"/>
</dbReference>
<dbReference type="SMR" id="Q3JE31"/>
<dbReference type="FunCoup" id="Q3JE31">
    <property type="interactions" value="240"/>
</dbReference>
<dbReference type="STRING" id="323261.Noc_0389"/>
<dbReference type="KEGG" id="noc:Noc_0389"/>
<dbReference type="eggNOG" id="COG0617">
    <property type="taxonomic scope" value="Bacteria"/>
</dbReference>
<dbReference type="HOGENOM" id="CLU_015961_1_1_6"/>
<dbReference type="InParanoid" id="Q3JE31"/>
<dbReference type="Proteomes" id="UP000006838">
    <property type="component" value="Chromosome"/>
</dbReference>
<dbReference type="GO" id="GO:0005524">
    <property type="term" value="F:ATP binding"/>
    <property type="evidence" value="ECO:0007669"/>
    <property type="project" value="UniProtKB-UniRule"/>
</dbReference>
<dbReference type="GO" id="GO:0004810">
    <property type="term" value="F:CCA tRNA nucleotidyltransferase activity"/>
    <property type="evidence" value="ECO:0007669"/>
    <property type="project" value="UniProtKB-UniRule"/>
</dbReference>
<dbReference type="GO" id="GO:0004112">
    <property type="term" value="F:cyclic-nucleotide phosphodiesterase activity"/>
    <property type="evidence" value="ECO:0007669"/>
    <property type="project" value="UniProtKB-UniRule"/>
</dbReference>
<dbReference type="GO" id="GO:0000287">
    <property type="term" value="F:magnesium ion binding"/>
    <property type="evidence" value="ECO:0007669"/>
    <property type="project" value="UniProtKB-UniRule"/>
</dbReference>
<dbReference type="GO" id="GO:0016791">
    <property type="term" value="F:phosphatase activity"/>
    <property type="evidence" value="ECO:0007669"/>
    <property type="project" value="UniProtKB-UniRule"/>
</dbReference>
<dbReference type="GO" id="GO:0000049">
    <property type="term" value="F:tRNA binding"/>
    <property type="evidence" value="ECO:0007669"/>
    <property type="project" value="UniProtKB-UniRule"/>
</dbReference>
<dbReference type="GO" id="GO:0042245">
    <property type="term" value="P:RNA repair"/>
    <property type="evidence" value="ECO:0007669"/>
    <property type="project" value="UniProtKB-KW"/>
</dbReference>
<dbReference type="GO" id="GO:0001680">
    <property type="term" value="P:tRNA 3'-terminal CCA addition"/>
    <property type="evidence" value="ECO:0007669"/>
    <property type="project" value="UniProtKB-UniRule"/>
</dbReference>
<dbReference type="CDD" id="cd00077">
    <property type="entry name" value="HDc"/>
    <property type="match status" value="1"/>
</dbReference>
<dbReference type="CDD" id="cd05398">
    <property type="entry name" value="NT_ClassII-CCAase"/>
    <property type="match status" value="1"/>
</dbReference>
<dbReference type="Gene3D" id="3.30.460.10">
    <property type="entry name" value="Beta Polymerase, domain 2"/>
    <property type="match status" value="1"/>
</dbReference>
<dbReference type="Gene3D" id="1.10.3090.10">
    <property type="entry name" value="cca-adding enzyme, domain 2"/>
    <property type="match status" value="1"/>
</dbReference>
<dbReference type="HAMAP" id="MF_01261">
    <property type="entry name" value="CCA_bact_type1"/>
    <property type="match status" value="1"/>
</dbReference>
<dbReference type="HAMAP" id="MF_01262">
    <property type="entry name" value="CCA_bact_type2"/>
    <property type="match status" value="1"/>
</dbReference>
<dbReference type="InterPro" id="IPR012006">
    <property type="entry name" value="CCA_bact"/>
</dbReference>
<dbReference type="InterPro" id="IPR003607">
    <property type="entry name" value="HD/PDEase_dom"/>
</dbReference>
<dbReference type="InterPro" id="IPR006674">
    <property type="entry name" value="HD_domain"/>
</dbReference>
<dbReference type="InterPro" id="IPR043519">
    <property type="entry name" value="NT_sf"/>
</dbReference>
<dbReference type="InterPro" id="IPR002646">
    <property type="entry name" value="PolA_pol_head_dom"/>
</dbReference>
<dbReference type="InterPro" id="IPR032828">
    <property type="entry name" value="PolyA_RNA-bd"/>
</dbReference>
<dbReference type="InterPro" id="IPR050124">
    <property type="entry name" value="tRNA_CCA-adding_enzyme"/>
</dbReference>
<dbReference type="NCBIfam" id="NF008137">
    <property type="entry name" value="PRK10885.1"/>
    <property type="match status" value="1"/>
</dbReference>
<dbReference type="PANTHER" id="PTHR47545">
    <property type="entry name" value="MULTIFUNCTIONAL CCA PROTEIN"/>
    <property type="match status" value="1"/>
</dbReference>
<dbReference type="PANTHER" id="PTHR47545:SF1">
    <property type="entry name" value="MULTIFUNCTIONAL CCA PROTEIN"/>
    <property type="match status" value="1"/>
</dbReference>
<dbReference type="Pfam" id="PF01966">
    <property type="entry name" value="HD"/>
    <property type="match status" value="1"/>
</dbReference>
<dbReference type="Pfam" id="PF01743">
    <property type="entry name" value="PolyA_pol"/>
    <property type="match status" value="1"/>
</dbReference>
<dbReference type="Pfam" id="PF12627">
    <property type="entry name" value="PolyA_pol_RNAbd"/>
    <property type="match status" value="1"/>
</dbReference>
<dbReference type="PIRSF" id="PIRSF000813">
    <property type="entry name" value="CCA_bact"/>
    <property type="match status" value="1"/>
</dbReference>
<dbReference type="SMART" id="SM00471">
    <property type="entry name" value="HDc"/>
    <property type="match status" value="1"/>
</dbReference>
<dbReference type="SUPFAM" id="SSF81301">
    <property type="entry name" value="Nucleotidyltransferase"/>
    <property type="match status" value="1"/>
</dbReference>
<dbReference type="SUPFAM" id="SSF81891">
    <property type="entry name" value="Poly A polymerase C-terminal region-like"/>
    <property type="match status" value="1"/>
</dbReference>
<dbReference type="PROSITE" id="PS51831">
    <property type="entry name" value="HD"/>
    <property type="match status" value="1"/>
</dbReference>
<evidence type="ECO:0000255" key="1">
    <source>
        <dbReference type="HAMAP-Rule" id="MF_01261"/>
    </source>
</evidence>
<proteinExistence type="inferred from homology"/>
<protein>
    <recommendedName>
        <fullName evidence="1">Multifunctional CCA protein</fullName>
    </recommendedName>
    <domain>
        <recommendedName>
            <fullName evidence="1">CCA-adding enzyme</fullName>
            <ecNumber evidence="1">2.7.7.72</ecNumber>
        </recommendedName>
        <alternativeName>
            <fullName evidence="1">CCA tRNA nucleotidyltransferase</fullName>
        </alternativeName>
        <alternativeName>
            <fullName evidence="1">tRNA CCA-pyrophosphorylase</fullName>
        </alternativeName>
        <alternativeName>
            <fullName evidence="1">tRNA adenylyl-/cytidylyl-transferase</fullName>
        </alternativeName>
        <alternativeName>
            <fullName evidence="1">tRNA nucleotidyltransferase</fullName>
        </alternativeName>
        <alternativeName>
            <fullName evidence="1">tRNA-NT</fullName>
        </alternativeName>
    </domain>
    <domain>
        <recommendedName>
            <fullName evidence="1">2'-nucleotidase</fullName>
            <ecNumber evidence="1">3.1.3.-</ecNumber>
        </recommendedName>
    </domain>
    <domain>
        <recommendedName>
            <fullName evidence="1">2',3'-cyclic phosphodiesterase</fullName>
            <ecNumber evidence="1">3.1.4.-</ecNumber>
        </recommendedName>
    </domain>
    <domain>
        <recommendedName>
            <fullName evidence="1">Phosphatase</fullName>
            <ecNumber evidence="1">3.1.3.-</ecNumber>
        </recommendedName>
    </domain>
</protein>
<reference key="1">
    <citation type="journal article" date="2006" name="Appl. Environ. Microbiol.">
        <title>Complete genome sequence of the marine, chemolithoautotrophic, ammonia-oxidizing bacterium Nitrosococcus oceani ATCC 19707.</title>
        <authorList>
            <person name="Klotz M.G."/>
            <person name="Arp D.J."/>
            <person name="Chain P.S.G."/>
            <person name="El-Sheikh A.F."/>
            <person name="Hauser L.J."/>
            <person name="Hommes N.G."/>
            <person name="Larimer F.W."/>
            <person name="Malfatti S.A."/>
            <person name="Norton J.M."/>
            <person name="Poret-Peterson A.T."/>
            <person name="Vergez L.M."/>
            <person name="Ward B.B."/>
        </authorList>
    </citation>
    <scope>NUCLEOTIDE SEQUENCE [LARGE SCALE GENOMIC DNA]</scope>
    <source>
        <strain>ATCC 19707 / BCRC 17464 / JCM 30415 / NCIMB 11848 / C-107</strain>
    </source>
</reference>
<gene>
    <name evidence="1" type="primary">cca</name>
    <name type="ordered locus">Noc_0389</name>
</gene>
<accession>Q3JE31</accession>
<sequence>MEVYLVGGAVRDKLLGRPVKERDYVVVGTTPANLLAQGYRPVGKDFPVFLHPQTQEEYALARTERKTGPGYKGFEVDAAPDVTLEEDLQRRDLTINAIAEAADGSLLDPFGGQQDLARGILRHVSPAFAEDPVRILRAARFAARFNFKVAPETLALMEAMVTAGEADHLVPERVWRELERALGESYPRRFFEILRACGALARIFPEIECLFGVPQPRRYHPEIDTGIHTLKVLEIAAHLSSDTQVRFAALTHDLGKGQTPSHEWPHHYGHGERGVALVLTLCQRLRVPKAYQALAVQVARYHNLVHQAQELRPGTILKLLNRVDAFRRPSRFEQFLLACEADARGRSGLENRPYPQANQLRLAFRAAAAVTARPLVAAGLRGEAIAEQLQQQRIKAIKQAVHTERG</sequence>
<comment type="function">
    <text evidence="1">Catalyzes the addition and repair of the essential 3'-terminal CCA sequence in tRNAs without using a nucleic acid template. Adds these three nucleotides in the order of C, C, and A to the tRNA nucleotide-73, using CTP and ATP as substrates and producing inorganic pyrophosphate. tRNA 3'-terminal CCA addition is required both for tRNA processing and repair. Also involved in tRNA surveillance by mediating tandem CCA addition to generate a CCACCA at the 3' terminus of unstable tRNAs. While stable tRNAs receive only 3'-terminal CCA, unstable tRNAs are marked with CCACCA and rapidly degraded.</text>
</comment>
<comment type="catalytic activity">
    <reaction evidence="1">
        <text>a tRNA precursor + 2 CTP + ATP = a tRNA with a 3' CCA end + 3 diphosphate</text>
        <dbReference type="Rhea" id="RHEA:14433"/>
        <dbReference type="Rhea" id="RHEA-COMP:10465"/>
        <dbReference type="Rhea" id="RHEA-COMP:10468"/>
        <dbReference type="ChEBI" id="CHEBI:30616"/>
        <dbReference type="ChEBI" id="CHEBI:33019"/>
        <dbReference type="ChEBI" id="CHEBI:37563"/>
        <dbReference type="ChEBI" id="CHEBI:74896"/>
        <dbReference type="ChEBI" id="CHEBI:83071"/>
        <dbReference type="EC" id="2.7.7.72"/>
    </reaction>
</comment>
<comment type="catalytic activity">
    <reaction evidence="1">
        <text>a tRNA with a 3' CCA end + 2 CTP + ATP = a tRNA with a 3' CCACCA end + 3 diphosphate</text>
        <dbReference type="Rhea" id="RHEA:76235"/>
        <dbReference type="Rhea" id="RHEA-COMP:10468"/>
        <dbReference type="Rhea" id="RHEA-COMP:18655"/>
        <dbReference type="ChEBI" id="CHEBI:30616"/>
        <dbReference type="ChEBI" id="CHEBI:33019"/>
        <dbReference type="ChEBI" id="CHEBI:37563"/>
        <dbReference type="ChEBI" id="CHEBI:83071"/>
        <dbReference type="ChEBI" id="CHEBI:195187"/>
    </reaction>
    <physiologicalReaction direction="left-to-right" evidence="1">
        <dbReference type="Rhea" id="RHEA:76236"/>
    </physiologicalReaction>
</comment>
<comment type="cofactor">
    <cofactor evidence="1">
        <name>Mg(2+)</name>
        <dbReference type="ChEBI" id="CHEBI:18420"/>
    </cofactor>
    <text evidence="1">Magnesium is required for nucleotidyltransferase activity.</text>
</comment>
<comment type="cofactor">
    <cofactor evidence="1">
        <name>Ni(2+)</name>
        <dbReference type="ChEBI" id="CHEBI:49786"/>
    </cofactor>
    <text evidence="1">Nickel for phosphatase activity.</text>
</comment>
<comment type="subunit">
    <text evidence="1">Monomer. Can also form homodimers and oligomers.</text>
</comment>
<comment type="domain">
    <text evidence="1">Comprises two domains: an N-terminal domain containing the nucleotidyltransferase activity and a C-terminal HD domain associated with both phosphodiesterase and phosphatase activities.</text>
</comment>
<comment type="miscellaneous">
    <text evidence="1">A single active site specifically recognizes both ATP and CTP and is responsible for their addition.</text>
</comment>
<comment type="similarity">
    <text evidence="1">Belongs to the tRNA nucleotidyltransferase/poly(A) polymerase family. Bacterial CCA-adding enzyme type 1 subfamily.</text>
</comment>
<keyword id="KW-0067">ATP-binding</keyword>
<keyword id="KW-0378">Hydrolase</keyword>
<keyword id="KW-0460">Magnesium</keyword>
<keyword id="KW-0479">Metal-binding</keyword>
<keyword id="KW-0511">Multifunctional enzyme</keyword>
<keyword id="KW-0533">Nickel</keyword>
<keyword id="KW-0547">Nucleotide-binding</keyword>
<keyword id="KW-0548">Nucleotidyltransferase</keyword>
<keyword id="KW-1185">Reference proteome</keyword>
<keyword id="KW-0692">RNA repair</keyword>
<keyword id="KW-0694">RNA-binding</keyword>
<keyword id="KW-0808">Transferase</keyword>
<keyword id="KW-0819">tRNA processing</keyword>